<name>CTL4_DANRE</name>
<reference key="1">
    <citation type="submission" date="2003-07" db="EMBL/GenBank/DDBJ databases">
        <authorList>
            <consortium name="NIH - Zebrafish Gene Collection (ZGC) project"/>
        </authorList>
    </citation>
    <scope>NUCLEOTIDE SEQUENCE [LARGE SCALE MRNA]</scope>
    <source>
        <tissue>Kidney</tissue>
    </source>
</reference>
<reference key="2">
    <citation type="journal article" date="2017" name="Hum. Mol. Genet.">
        <title>SLC44A4 mutation causes autosomal dominant hereditary postlingual non-syndromic mid-frequency hearing loss.</title>
        <authorList>
            <person name="Ma Z."/>
            <person name="Xia W."/>
            <person name="Liu F."/>
            <person name="Ma J."/>
            <person name="Sun S."/>
            <person name="Zhang J."/>
            <person name="Jiang N."/>
            <person name="Wang X."/>
            <person name="Hu J."/>
            <person name="Ma D."/>
        </authorList>
    </citation>
    <scope>FUNCTION</scope>
    <scope>DEVELOPMENTAL STAGE</scope>
    <scope>DISRUPTION PHENOTYPE</scope>
</reference>
<accession>Q7T2B0</accession>
<keyword id="KW-0050">Antiport</keyword>
<keyword id="KW-1003">Cell membrane</keyword>
<keyword id="KW-0325">Glycoprotein</keyword>
<keyword id="KW-0472">Membrane</keyword>
<keyword id="KW-1185">Reference proteome</keyword>
<keyword id="KW-0812">Transmembrane</keyword>
<keyword id="KW-1133">Transmembrane helix</keyword>
<keyword id="KW-0813">Transport</keyword>
<evidence type="ECO:0000250" key="1">
    <source>
        <dbReference type="UniProtKB" id="Q53GD3"/>
    </source>
</evidence>
<evidence type="ECO:0000250" key="2">
    <source>
        <dbReference type="UniProtKB" id="Q91VA1"/>
    </source>
</evidence>
<evidence type="ECO:0000255" key="3"/>
<evidence type="ECO:0000269" key="4">
    <source>
    </source>
</evidence>
<evidence type="ECO:0000305" key="5"/>
<dbReference type="EMBL" id="BC054620">
    <property type="protein sequence ID" value="AAH54620.1"/>
    <property type="molecule type" value="mRNA"/>
</dbReference>
<dbReference type="RefSeq" id="NP_956707.1">
    <property type="nucleotide sequence ID" value="NM_200413.1"/>
</dbReference>
<dbReference type="SMR" id="Q7T2B0"/>
<dbReference type="FunCoup" id="Q7T2B0">
    <property type="interactions" value="1623"/>
</dbReference>
<dbReference type="STRING" id="7955.ENSDARP00000136095"/>
<dbReference type="GlyCosmos" id="Q7T2B0">
    <property type="glycosylation" value="8 sites, No reported glycans"/>
</dbReference>
<dbReference type="GeneID" id="393385"/>
<dbReference type="KEGG" id="dre:393385"/>
<dbReference type="AGR" id="ZFIN:ZDB-GENE-040426-1371"/>
<dbReference type="CTD" id="80736"/>
<dbReference type="ZFIN" id="ZDB-GENE-040426-1371">
    <property type="gene designation" value="slc44a4"/>
</dbReference>
<dbReference type="InParanoid" id="Q7T2B0"/>
<dbReference type="OrthoDB" id="420519at2759"/>
<dbReference type="PhylomeDB" id="Q7T2B0"/>
<dbReference type="Reactome" id="R-DRE-1483191">
    <property type="pathway name" value="Synthesis of PC"/>
</dbReference>
<dbReference type="Reactome" id="R-DRE-425366">
    <property type="pathway name" value="Transport of bile salts and organic acids, metal ions and amine compounds"/>
</dbReference>
<dbReference type="PRO" id="PR:Q7T2B0"/>
<dbReference type="Proteomes" id="UP000000437">
    <property type="component" value="Chromosome 19"/>
</dbReference>
<dbReference type="GO" id="GO:0016324">
    <property type="term" value="C:apical plasma membrane"/>
    <property type="evidence" value="ECO:0007669"/>
    <property type="project" value="UniProtKB-SubCell"/>
</dbReference>
<dbReference type="GO" id="GO:0005886">
    <property type="term" value="C:plasma membrane"/>
    <property type="evidence" value="ECO:0000318"/>
    <property type="project" value="GO_Central"/>
</dbReference>
<dbReference type="GO" id="GO:0015297">
    <property type="term" value="F:antiporter activity"/>
    <property type="evidence" value="ECO:0007669"/>
    <property type="project" value="UniProtKB-KW"/>
</dbReference>
<dbReference type="GO" id="GO:0015220">
    <property type="term" value="F:choline transmembrane transporter activity"/>
    <property type="evidence" value="ECO:0000250"/>
    <property type="project" value="UniProtKB"/>
</dbReference>
<dbReference type="GO" id="GO:0090422">
    <property type="term" value="F:thiamine pyrophosphate transmembrane transporter activity"/>
    <property type="evidence" value="ECO:0000318"/>
    <property type="project" value="GO_Central"/>
</dbReference>
<dbReference type="GO" id="GO:0008292">
    <property type="term" value="P:acetylcholine biosynthetic process"/>
    <property type="evidence" value="ECO:0000250"/>
    <property type="project" value="UniProtKB"/>
</dbReference>
<dbReference type="GO" id="GO:0061526">
    <property type="term" value="P:acetylcholine secretion"/>
    <property type="evidence" value="ECO:0000250"/>
    <property type="project" value="UniProtKB"/>
</dbReference>
<dbReference type="GO" id="GO:0015871">
    <property type="term" value="P:choline transport"/>
    <property type="evidence" value="ECO:0000250"/>
    <property type="project" value="UniProtKB"/>
</dbReference>
<dbReference type="GO" id="GO:0035675">
    <property type="term" value="P:neuromast hair cell development"/>
    <property type="evidence" value="ECO:0000315"/>
    <property type="project" value="UniProtKB"/>
</dbReference>
<dbReference type="GO" id="GO:0048840">
    <property type="term" value="P:otolith development"/>
    <property type="evidence" value="ECO:0000315"/>
    <property type="project" value="ZFIN"/>
</dbReference>
<dbReference type="GO" id="GO:0032475">
    <property type="term" value="P:otolith formation"/>
    <property type="evidence" value="ECO:0000315"/>
    <property type="project" value="UniProtKB"/>
</dbReference>
<dbReference type="GO" id="GO:0030307">
    <property type="term" value="P:positive regulation of cell growth"/>
    <property type="evidence" value="ECO:0000250"/>
    <property type="project" value="UniProtKB"/>
</dbReference>
<dbReference type="GO" id="GO:0030974">
    <property type="term" value="P:thiamine pyrophosphate transmembrane transport"/>
    <property type="evidence" value="ECO:0000318"/>
    <property type="project" value="GO_Central"/>
</dbReference>
<dbReference type="InterPro" id="IPR007603">
    <property type="entry name" value="Choline_transptr-like"/>
</dbReference>
<dbReference type="PANTHER" id="PTHR12385">
    <property type="entry name" value="CHOLINE TRANSPORTER-LIKE (SLC FAMILY 44)"/>
    <property type="match status" value="1"/>
</dbReference>
<dbReference type="PANTHER" id="PTHR12385:SF37">
    <property type="entry name" value="CHOLINE TRANSPORTER-LIKE PROTEIN 4"/>
    <property type="match status" value="1"/>
</dbReference>
<dbReference type="Pfam" id="PF04515">
    <property type="entry name" value="Choline_transpo"/>
    <property type="match status" value="1"/>
</dbReference>
<sequence length="723" mass="80873">MGKKKQEEEQNSSEYGAPAQYDPTFNGPIHKRSCTDIICCVLFMLVITGYMVVGILAWLYGDPRHVLYPRNSTGMFCGIGQNQNKPSVLYFDILKCATATNIMAAALQGLQCPTTQVCVSSCPSGFWALSPLAYLPNAKPADYFQQELCVPSLQLKDTTYTVMEIINKELCPYYYTPTTSVLDRCLPSLGGSAYNPSNIPANFSLPGLSINQTLSTIANATSDLTNSFNMKDVGLRIFEDFAKTWQWIVAGLVIAMVVSVLFLLLLRFTAPVLIWILIFGVLAVGAFGIWYCYNDYMSLASSNLTFSNVGFTTNVQVYLQVRDTWLAFLIILCIVEAVLILALIFLRTRILIAIALIQETSKALGHMMSTLLYPVVTFVLLLVCVSYWGITALYLATSGAPIYKVVALNTTQGDCSNIQANQTCDPQTFNSSRYSSCPSARCVFINYNTEGLFQRNLFNLQIYNVVAFLWCVNFVIALGHCTLAGAFASYYWAFSKPADIPTFPLTQSFMRALRYHVGSLAFGALILTLVQIVRIILEYLDHKFKAAQNPCARFLMCCLKCCFWCLEKFIKFINRNAYIMIAIYGKNFCVSAKNAFFLLMRNIVRVVVLDKVTDLLLFFGKLLVVGGIGVLAFFFFSGRIQLPGNTFQTAALNYYWMPIITVVFGAYLIAHGFFSVYNMGVDTLFLCFLEDLERNDGSAEKPYFMSKNLMKILNKKNKQPKTG</sequence>
<organism>
    <name type="scientific">Danio rerio</name>
    <name type="common">Zebrafish</name>
    <name type="synonym">Brachydanio rerio</name>
    <dbReference type="NCBI Taxonomy" id="7955"/>
    <lineage>
        <taxon>Eukaryota</taxon>
        <taxon>Metazoa</taxon>
        <taxon>Chordata</taxon>
        <taxon>Craniata</taxon>
        <taxon>Vertebrata</taxon>
        <taxon>Euteleostomi</taxon>
        <taxon>Actinopterygii</taxon>
        <taxon>Neopterygii</taxon>
        <taxon>Teleostei</taxon>
        <taxon>Ostariophysi</taxon>
        <taxon>Cypriniformes</taxon>
        <taxon>Danionidae</taxon>
        <taxon>Danioninae</taxon>
        <taxon>Danio</taxon>
    </lineage>
</organism>
<feature type="chain" id="PRO_0000359722" description="Choline transporter-like protein 4">
    <location>
        <begin position="1"/>
        <end position="723"/>
    </location>
</feature>
<feature type="topological domain" description="Cytoplasmic" evidence="3">
    <location>
        <begin position="1"/>
        <end position="36"/>
    </location>
</feature>
<feature type="transmembrane region" description="Helical" evidence="3">
    <location>
        <begin position="37"/>
        <end position="57"/>
    </location>
</feature>
<feature type="topological domain" description="Extracellular" evidence="3">
    <location>
        <begin position="58"/>
        <end position="245"/>
    </location>
</feature>
<feature type="transmembrane region" description="Helical" evidence="3">
    <location>
        <begin position="246"/>
        <end position="266"/>
    </location>
</feature>
<feature type="topological domain" description="Cytoplasmic" evidence="3">
    <location>
        <begin position="267"/>
        <end position="269"/>
    </location>
</feature>
<feature type="transmembrane region" description="Helical" evidence="3">
    <location>
        <begin position="270"/>
        <end position="290"/>
    </location>
</feature>
<feature type="topological domain" description="Extracellular" evidence="3">
    <location>
        <begin position="291"/>
        <end position="325"/>
    </location>
</feature>
<feature type="transmembrane region" description="Helical" evidence="3">
    <location>
        <begin position="326"/>
        <end position="346"/>
    </location>
</feature>
<feature type="topological domain" description="Cytoplasmic" evidence="3">
    <location>
        <begin position="347"/>
        <end position="374"/>
    </location>
</feature>
<feature type="transmembrane region" description="Helical" evidence="3">
    <location>
        <begin position="375"/>
        <end position="395"/>
    </location>
</feature>
<feature type="topological domain" description="Extracellular" evidence="3">
    <location>
        <begin position="396"/>
        <end position="464"/>
    </location>
</feature>
<feature type="transmembrane region" description="Helical" evidence="3">
    <location>
        <begin position="465"/>
        <end position="485"/>
    </location>
</feature>
<feature type="topological domain" description="Cytoplasmic" evidence="3">
    <location>
        <begin position="486"/>
        <end position="516"/>
    </location>
</feature>
<feature type="transmembrane region" description="Helical" evidence="3">
    <location>
        <begin position="517"/>
        <end position="537"/>
    </location>
</feature>
<feature type="topological domain" description="Extracellular" evidence="3">
    <location>
        <begin position="538"/>
        <end position="578"/>
    </location>
</feature>
<feature type="transmembrane region" description="Helical" evidence="3">
    <location>
        <begin position="579"/>
        <end position="599"/>
    </location>
</feature>
<feature type="topological domain" description="Cytoplasmic" evidence="3">
    <location>
        <begin position="600"/>
        <end position="615"/>
    </location>
</feature>
<feature type="transmembrane region" description="Helical" evidence="3">
    <location>
        <begin position="616"/>
        <end position="636"/>
    </location>
</feature>
<feature type="topological domain" description="Extracellular" evidence="3">
    <location>
        <begin position="637"/>
        <end position="655"/>
    </location>
</feature>
<feature type="transmembrane region" description="Helical" evidence="3">
    <location>
        <begin position="656"/>
        <end position="676"/>
    </location>
</feature>
<feature type="topological domain" description="Cytoplasmic" evidence="3">
    <location>
        <begin position="677"/>
        <end position="723"/>
    </location>
</feature>
<feature type="glycosylation site" description="N-linked (GlcNAc...) asparagine" evidence="3">
    <location>
        <position position="71"/>
    </location>
</feature>
<feature type="glycosylation site" description="N-linked (GlcNAc...) asparagine" evidence="3">
    <location>
        <position position="202"/>
    </location>
</feature>
<feature type="glycosylation site" description="N-linked (GlcNAc...) asparagine" evidence="3">
    <location>
        <position position="211"/>
    </location>
</feature>
<feature type="glycosylation site" description="N-linked (GlcNAc...) asparagine" evidence="3">
    <location>
        <position position="219"/>
    </location>
</feature>
<feature type="glycosylation site" description="N-linked (GlcNAc...) asparagine" evidence="3">
    <location>
        <position position="303"/>
    </location>
</feature>
<feature type="glycosylation site" description="N-linked (GlcNAc...) asparagine" evidence="3">
    <location>
        <position position="409"/>
    </location>
</feature>
<feature type="glycosylation site" description="N-linked (GlcNAc...) asparagine" evidence="3">
    <location>
        <position position="421"/>
    </location>
</feature>
<feature type="glycosylation site" description="N-linked (GlcNAc...) asparagine" evidence="3">
    <location>
        <position position="430"/>
    </location>
</feature>
<comment type="function">
    <text evidence="1 2 4">Choline transporter that seems to play a role in the choline-acetylcholine system and is required to the efferent innervation of hair cells in the olivocochlear bundle for the maintenance of physiological function of outer hair cells and the protection of hair cells from acoustic injury. Also described as a thiamine pyrophosphate transporter (By similarity).</text>
</comment>
<comment type="catalytic activity">
    <reaction evidence="1">
        <text>choline(out) + n H(+)(in) = choline(in) + n H(+)(out)</text>
        <dbReference type="Rhea" id="RHEA:75463"/>
        <dbReference type="ChEBI" id="CHEBI:15354"/>
        <dbReference type="ChEBI" id="CHEBI:15378"/>
    </reaction>
</comment>
<comment type="catalytic activity">
    <reaction evidence="1">
        <text>thiamine diphosphate(out) = thiamine diphosphate(in)</text>
        <dbReference type="Rhea" id="RHEA:75471"/>
        <dbReference type="ChEBI" id="CHEBI:58937"/>
    </reaction>
</comment>
<comment type="subcellular location">
    <subcellularLocation>
        <location evidence="1">Membrane</location>
        <topology evidence="1">Multi-pass membrane protein</topology>
    </subcellularLocation>
    <subcellularLocation>
        <location evidence="1">Apical cell membrane</location>
    </subcellularLocation>
</comment>
<comment type="developmental stage">
    <text evidence="4">Gene expression gradually increases from 36 to 96 hours post-fertilization (hpf). At 12 hpf, expressed broadly, but at 26 hpf, the expression clusters around the otic vesicle, pectoral fin, and midbrain.</text>
</comment>
<comment type="disruption phenotype">
    <text evidence="4">Morpholino knockdown of the protein causes abnormal numbers of small, fused, and misplaced otoliths, and a smaller inner ear. Neuromasts of the morphants are smaller, and the number of lateral line neuromasts in the morphants is fewer than in the wild-type. Fewer hair cells per neuromast are found in both the anterior and posterior line of morpholino knockdown larvae (120 hpf) than in the wild-type. Knockdown larvae have a defective balance system, they show an abnormal swimming behavior by remaining stationary and resting in abnormal positions, they swim up and down and in circles. They also show some hearing loss.</text>
</comment>
<comment type="similarity">
    <text evidence="5">Belongs to the CTL (choline transporter-like) family.</text>
</comment>
<gene>
    <name type="primary">slc44a4</name>
    <name type="synonym">ctl4</name>
</gene>
<proteinExistence type="evidence at transcript level"/>
<protein>
    <recommendedName>
        <fullName>Choline transporter-like protein 4</fullName>
    </recommendedName>
    <alternativeName>
        <fullName>Solute carrier family 44 member 4</fullName>
    </alternativeName>
</protein>